<proteinExistence type="inferred from homology"/>
<reference key="1">
    <citation type="journal article" date="2011" name="MBio">
        <title>Novel metabolic attributes of the genus Cyanothece, comprising a group of unicellular nitrogen-fixing Cyanobacteria.</title>
        <authorList>
            <person name="Bandyopadhyay A."/>
            <person name="Elvitigala T."/>
            <person name="Welsh E."/>
            <person name="Stockel J."/>
            <person name="Liberton M."/>
            <person name="Min H."/>
            <person name="Sherman L.A."/>
            <person name="Pakrasi H.B."/>
        </authorList>
    </citation>
    <scope>NUCLEOTIDE SEQUENCE [LARGE SCALE GENOMIC DNA]</scope>
    <source>
        <strain>PCC 7425 / ATCC 29141</strain>
    </source>
</reference>
<sequence>MKIFVYYTPERVPDGTVAECAIAVDVLRATTTIATALAAGAEAIQVFSDLDKLIATSATWPAERCIRVGERGGKTVDGFDMGNSPFDCTPERVKACRLFMSTTNGTRSLQRIESAKTVIAAALVNREAVAKFIYTQQPETVWIVGSGWEGSYSLEDTVCAGAIAHSLLLATGIPLEDLAGNDETIAAIALYRSYREDLLSLLQQASHGKRLLNLNCHEDLKYCSQTDILDVLPVQQQPGVLVAH</sequence>
<evidence type="ECO:0000255" key="1">
    <source>
        <dbReference type="HAMAP-Rule" id="MF_00490"/>
    </source>
</evidence>
<comment type="catalytic activity">
    <reaction evidence="1">
        <text>(2R)-O-phospho-3-sulfolactate + H2O = (2R)-3-sulfolactate + phosphate</text>
        <dbReference type="Rhea" id="RHEA:23416"/>
        <dbReference type="ChEBI" id="CHEBI:15377"/>
        <dbReference type="ChEBI" id="CHEBI:15597"/>
        <dbReference type="ChEBI" id="CHEBI:43474"/>
        <dbReference type="ChEBI" id="CHEBI:58738"/>
        <dbReference type="EC" id="3.1.3.71"/>
    </reaction>
</comment>
<comment type="cofactor">
    <cofactor evidence="1">
        <name>Mg(2+)</name>
        <dbReference type="ChEBI" id="CHEBI:18420"/>
    </cofactor>
</comment>
<comment type="similarity">
    <text evidence="1">Belongs to the ComB family.</text>
</comment>
<accession>B8HW27</accession>
<keyword id="KW-0378">Hydrolase</keyword>
<keyword id="KW-0460">Magnesium</keyword>
<dbReference type="EC" id="3.1.3.71" evidence="1"/>
<dbReference type="EMBL" id="CP001344">
    <property type="protein sequence ID" value="ACL43205.1"/>
    <property type="molecule type" value="Genomic_DNA"/>
</dbReference>
<dbReference type="SMR" id="B8HW27"/>
<dbReference type="STRING" id="395961.Cyan7425_0819"/>
<dbReference type="KEGG" id="cyn:Cyan7425_0819"/>
<dbReference type="eggNOG" id="COG2045">
    <property type="taxonomic scope" value="Bacteria"/>
</dbReference>
<dbReference type="HOGENOM" id="CLU_070028_0_1_3"/>
<dbReference type="OrthoDB" id="4913at2"/>
<dbReference type="GO" id="GO:0050532">
    <property type="term" value="F:2-phosphosulfolactate phosphatase activity"/>
    <property type="evidence" value="ECO:0007669"/>
    <property type="project" value="UniProtKB-UniRule"/>
</dbReference>
<dbReference type="GO" id="GO:0000287">
    <property type="term" value="F:magnesium ion binding"/>
    <property type="evidence" value="ECO:0007669"/>
    <property type="project" value="UniProtKB-UniRule"/>
</dbReference>
<dbReference type="GO" id="GO:0050545">
    <property type="term" value="F:sulfopyruvate decarboxylase activity"/>
    <property type="evidence" value="ECO:0007669"/>
    <property type="project" value="TreeGrafter"/>
</dbReference>
<dbReference type="FunFam" id="3.90.1560.10:FF:000001">
    <property type="entry name" value="Probable 2-phosphosulfolactate phosphatase"/>
    <property type="match status" value="1"/>
</dbReference>
<dbReference type="Gene3D" id="3.90.1560.10">
    <property type="entry name" value="ComB-like"/>
    <property type="match status" value="1"/>
</dbReference>
<dbReference type="HAMAP" id="MF_00490">
    <property type="entry name" value="ComB"/>
    <property type="match status" value="1"/>
</dbReference>
<dbReference type="InterPro" id="IPR005238">
    <property type="entry name" value="ComB-like"/>
</dbReference>
<dbReference type="InterPro" id="IPR036702">
    <property type="entry name" value="ComB-like_sf"/>
</dbReference>
<dbReference type="NCBIfam" id="NF002056">
    <property type="entry name" value="PRK00886.1-5"/>
    <property type="match status" value="1"/>
</dbReference>
<dbReference type="PANTHER" id="PTHR37311">
    <property type="entry name" value="2-PHOSPHOSULFOLACTATE PHOSPHATASE-RELATED"/>
    <property type="match status" value="1"/>
</dbReference>
<dbReference type="PANTHER" id="PTHR37311:SF1">
    <property type="entry name" value="2-PHOSPHOSULFOLACTATE PHOSPHATASE-RELATED"/>
    <property type="match status" value="1"/>
</dbReference>
<dbReference type="Pfam" id="PF04029">
    <property type="entry name" value="2-ph_phosp"/>
    <property type="match status" value="1"/>
</dbReference>
<dbReference type="SUPFAM" id="SSF142823">
    <property type="entry name" value="ComB-like"/>
    <property type="match status" value="1"/>
</dbReference>
<protein>
    <recommendedName>
        <fullName evidence="1">Probable 2-phosphosulfolactate phosphatase</fullName>
        <ecNumber evidence="1">3.1.3.71</ecNumber>
    </recommendedName>
</protein>
<name>COMB_CYAP4</name>
<organism>
    <name type="scientific">Cyanothece sp. (strain PCC 7425 / ATCC 29141)</name>
    <dbReference type="NCBI Taxonomy" id="395961"/>
    <lineage>
        <taxon>Bacteria</taxon>
        <taxon>Bacillati</taxon>
        <taxon>Cyanobacteriota</taxon>
        <taxon>Cyanophyceae</taxon>
        <taxon>Gomontiellales</taxon>
        <taxon>Cyanothecaceae</taxon>
        <taxon>Cyanothece</taxon>
    </lineage>
</organism>
<gene>
    <name evidence="1" type="primary">comB</name>
    <name type="ordered locus">Cyan7425_0819</name>
</gene>
<feature type="chain" id="PRO_1000189625" description="Probable 2-phosphosulfolactate phosphatase">
    <location>
        <begin position="1"/>
        <end position="244"/>
    </location>
</feature>